<gene>
    <name evidence="1" type="primary">thiI</name>
    <name type="ordered locus">STM0425</name>
</gene>
<sequence length="482" mass="54831">MKFIIKLFPEITIKSQSVRLRFIKILTGNIRNVLKHYDETLAVVRHWDNIEVRAKDENQRLVIRDALTRIPGIHHILEVEDVPFTDMHDIFEKALAQYREQLEGKTFCVRVKRRGKHEFSSIEVERYVGGGLNQHIESARVKLTNPDVTVHLEVEDDRLLLIKGRYEGIGGFPIGTQEDVLSLISGGFDSGVSSYMLMRRGCRVHYCFFNLGGAAHEIGVRQVAHYLWNRFGSSHRVRFVAINFEPVVGEILEKVDDGQMGVVLKRMMVRAASKVAERYGVQALVTGEALGQVSSQTLTNLRLIDNVSDTLILRPLISYDKEHIINLARQIGTEDFARTMPEYCGVISKSPTVKAIKAKIEAEEENFDFSILDKVVEEANNVDIREIAQQTQQEVVEVETVSGFGPNDVILDIRSVDEQDDKPLKVEGVDVVSLPFYKLSTKFGDLDQSKTWLLWCERGVMSRLQALYLREQGFANVKVYRP</sequence>
<reference key="1">
    <citation type="journal article" date="1997" name="J. Bacteriol.">
        <title>Characterization of thiI, a new gene involved in thiazole biosynthesis in Salmonella typhimurium.</title>
        <authorList>
            <person name="Webb E."/>
            <person name="Claas K."/>
            <person name="Downs D.M."/>
        </authorList>
    </citation>
    <scope>NUCLEOTIDE SEQUENCE [GENOMIC DNA]</scope>
    <source>
        <strain>LT2</strain>
    </source>
</reference>
<reference key="2">
    <citation type="journal article" date="2001" name="Nature">
        <title>Complete genome sequence of Salmonella enterica serovar Typhimurium LT2.</title>
        <authorList>
            <person name="McClelland M."/>
            <person name="Sanderson K.E."/>
            <person name="Spieth J."/>
            <person name="Clifton S.W."/>
            <person name="Latreille P."/>
            <person name="Courtney L."/>
            <person name="Porwollik S."/>
            <person name="Ali J."/>
            <person name="Dante M."/>
            <person name="Du F."/>
            <person name="Hou S."/>
            <person name="Layman D."/>
            <person name="Leonard S."/>
            <person name="Nguyen C."/>
            <person name="Scott K."/>
            <person name="Holmes A."/>
            <person name="Grewal N."/>
            <person name="Mulvaney E."/>
            <person name="Ryan E."/>
            <person name="Sun H."/>
            <person name="Florea L."/>
            <person name="Miller W."/>
            <person name="Stoneking T."/>
            <person name="Nhan M."/>
            <person name="Waterston R."/>
            <person name="Wilson R.K."/>
        </authorList>
    </citation>
    <scope>NUCLEOTIDE SEQUENCE [LARGE SCALE GENOMIC DNA]</scope>
    <source>
        <strain>LT2 / SGSC1412 / ATCC 700720</strain>
    </source>
</reference>
<reference key="3">
    <citation type="submission" date="1997-01" db="EMBL/GenBank/DDBJ databases">
        <authorList>
            <person name="Metcalf W.W."/>
            <person name="Jiang W."/>
            <person name="Wanner B.L."/>
        </authorList>
    </citation>
    <scope>NUCLEOTIDE SEQUENCE [GENOMIC DNA] OF 365-482</scope>
</reference>
<feature type="chain" id="PRO_0000154860" description="tRNA sulfurtransferase">
    <location>
        <begin position="1"/>
        <end position="482"/>
    </location>
</feature>
<feature type="domain" description="THUMP" evidence="1">
    <location>
        <begin position="61"/>
        <end position="165"/>
    </location>
</feature>
<feature type="domain" description="Rhodanese" evidence="1">
    <location>
        <begin position="404"/>
        <end position="482"/>
    </location>
</feature>
<feature type="active site" description="Cysteine persulfide intermediate" evidence="1">
    <location>
        <position position="456"/>
    </location>
</feature>
<feature type="binding site" evidence="1">
    <location>
        <begin position="183"/>
        <end position="184"/>
    </location>
    <ligand>
        <name>ATP</name>
        <dbReference type="ChEBI" id="CHEBI:30616"/>
    </ligand>
</feature>
<feature type="binding site" evidence="1">
    <location>
        <position position="265"/>
    </location>
    <ligand>
        <name>ATP</name>
        <dbReference type="ChEBI" id="CHEBI:30616"/>
    </ligand>
</feature>
<feature type="binding site" evidence="1">
    <location>
        <position position="287"/>
    </location>
    <ligand>
        <name>ATP</name>
        <dbReference type="ChEBI" id="CHEBI:30616"/>
    </ligand>
</feature>
<feature type="binding site" evidence="1">
    <location>
        <position position="296"/>
    </location>
    <ligand>
        <name>ATP</name>
        <dbReference type="ChEBI" id="CHEBI:30616"/>
    </ligand>
</feature>
<feature type="disulfide bond" description="Redox-active" evidence="1">
    <location>
        <begin position="344"/>
        <end position="456"/>
    </location>
</feature>
<feature type="sequence conflict" description="In Ref. 3; AAB39648." evidence="2" ref="3">
    <original>E</original>
    <variation>R</variation>
    <location>
        <position position="365"/>
    </location>
</feature>
<comment type="function">
    <text evidence="1">Catalyzes the ATP-dependent transfer of a sulfur to tRNA to produce 4-thiouridine in position 8 of tRNAs, which functions as a near-UV photosensor. Also catalyzes the transfer of sulfur to the sulfur carrier protein ThiS, forming ThiS-thiocarboxylate. This is a step in the synthesis of thiazole, in the thiamine biosynthesis pathway. The sulfur is donated as persulfide by IscS.</text>
</comment>
<comment type="catalytic activity">
    <reaction evidence="1">
        <text>[ThiI sulfur-carrier protein]-S-sulfanyl-L-cysteine + a uridine in tRNA + 2 reduced [2Fe-2S]-[ferredoxin] + ATP + H(+) = [ThiI sulfur-carrier protein]-L-cysteine + a 4-thiouridine in tRNA + 2 oxidized [2Fe-2S]-[ferredoxin] + AMP + diphosphate</text>
        <dbReference type="Rhea" id="RHEA:24176"/>
        <dbReference type="Rhea" id="RHEA-COMP:10000"/>
        <dbReference type="Rhea" id="RHEA-COMP:10001"/>
        <dbReference type="Rhea" id="RHEA-COMP:13337"/>
        <dbReference type="Rhea" id="RHEA-COMP:13338"/>
        <dbReference type="Rhea" id="RHEA-COMP:13339"/>
        <dbReference type="Rhea" id="RHEA-COMP:13340"/>
        <dbReference type="ChEBI" id="CHEBI:15378"/>
        <dbReference type="ChEBI" id="CHEBI:29950"/>
        <dbReference type="ChEBI" id="CHEBI:30616"/>
        <dbReference type="ChEBI" id="CHEBI:33019"/>
        <dbReference type="ChEBI" id="CHEBI:33737"/>
        <dbReference type="ChEBI" id="CHEBI:33738"/>
        <dbReference type="ChEBI" id="CHEBI:61963"/>
        <dbReference type="ChEBI" id="CHEBI:65315"/>
        <dbReference type="ChEBI" id="CHEBI:136798"/>
        <dbReference type="ChEBI" id="CHEBI:456215"/>
        <dbReference type="EC" id="2.8.1.4"/>
    </reaction>
</comment>
<comment type="catalytic activity">
    <reaction evidence="1">
        <text>[ThiS sulfur-carrier protein]-C-terminal Gly-Gly-AMP + S-sulfanyl-L-cysteinyl-[cysteine desulfurase] + AH2 = [ThiS sulfur-carrier protein]-C-terminal-Gly-aminoethanethioate + L-cysteinyl-[cysteine desulfurase] + A + AMP + 2 H(+)</text>
        <dbReference type="Rhea" id="RHEA:43340"/>
        <dbReference type="Rhea" id="RHEA-COMP:12157"/>
        <dbReference type="Rhea" id="RHEA-COMP:12158"/>
        <dbReference type="Rhea" id="RHEA-COMP:12910"/>
        <dbReference type="Rhea" id="RHEA-COMP:19908"/>
        <dbReference type="ChEBI" id="CHEBI:13193"/>
        <dbReference type="ChEBI" id="CHEBI:15378"/>
        <dbReference type="ChEBI" id="CHEBI:17499"/>
        <dbReference type="ChEBI" id="CHEBI:29950"/>
        <dbReference type="ChEBI" id="CHEBI:61963"/>
        <dbReference type="ChEBI" id="CHEBI:90618"/>
        <dbReference type="ChEBI" id="CHEBI:232372"/>
        <dbReference type="ChEBI" id="CHEBI:456215"/>
    </reaction>
</comment>
<comment type="pathway">
    <text evidence="1">Cofactor biosynthesis; thiamine diphosphate biosynthesis.</text>
</comment>
<comment type="subcellular location">
    <subcellularLocation>
        <location>Cytoplasm</location>
    </subcellularLocation>
</comment>
<comment type="similarity">
    <text evidence="1">Belongs to the ThiI family.</text>
</comment>
<dbReference type="EC" id="2.8.1.4" evidence="1"/>
<dbReference type="EMBL" id="U94901">
    <property type="protein sequence ID" value="AAB63031.1"/>
    <property type="molecule type" value="Genomic_DNA"/>
</dbReference>
<dbReference type="EMBL" id="AE006468">
    <property type="protein sequence ID" value="AAL19379.1"/>
    <property type="molecule type" value="Genomic_DNA"/>
</dbReference>
<dbReference type="EMBL" id="U69493">
    <property type="protein sequence ID" value="AAB39648.1"/>
    <property type="molecule type" value="Genomic_DNA"/>
</dbReference>
<dbReference type="PIR" id="T46944">
    <property type="entry name" value="T46944"/>
</dbReference>
<dbReference type="RefSeq" id="NP_459420.1">
    <property type="nucleotide sequence ID" value="NC_003197.2"/>
</dbReference>
<dbReference type="RefSeq" id="WP_000668708.1">
    <property type="nucleotide sequence ID" value="NC_003197.2"/>
</dbReference>
<dbReference type="SMR" id="P55913"/>
<dbReference type="STRING" id="99287.STM0425"/>
<dbReference type="PaxDb" id="99287-STM0425"/>
<dbReference type="GeneID" id="1251944"/>
<dbReference type="KEGG" id="stm:STM0425"/>
<dbReference type="PATRIC" id="fig|99287.12.peg.454"/>
<dbReference type="HOGENOM" id="CLU_037952_4_1_6"/>
<dbReference type="OMA" id="SMPEFCG"/>
<dbReference type="PhylomeDB" id="P55913"/>
<dbReference type="BioCyc" id="SENT99287:STM0425-MONOMER"/>
<dbReference type="UniPathway" id="UPA00060"/>
<dbReference type="Proteomes" id="UP000001014">
    <property type="component" value="Chromosome"/>
</dbReference>
<dbReference type="GO" id="GO:0005829">
    <property type="term" value="C:cytosol"/>
    <property type="evidence" value="ECO:0000318"/>
    <property type="project" value="GO_Central"/>
</dbReference>
<dbReference type="GO" id="GO:0005524">
    <property type="term" value="F:ATP binding"/>
    <property type="evidence" value="ECO:0007669"/>
    <property type="project" value="UniProtKB-UniRule"/>
</dbReference>
<dbReference type="GO" id="GO:0004810">
    <property type="term" value="F:CCA tRNA nucleotidyltransferase activity"/>
    <property type="evidence" value="ECO:0007669"/>
    <property type="project" value="InterPro"/>
</dbReference>
<dbReference type="GO" id="GO:0000049">
    <property type="term" value="F:tRNA binding"/>
    <property type="evidence" value="ECO:0007669"/>
    <property type="project" value="UniProtKB-UniRule"/>
</dbReference>
<dbReference type="GO" id="GO:0140741">
    <property type="term" value="F:tRNA-uracil-4 sulfurtransferase activity"/>
    <property type="evidence" value="ECO:0007669"/>
    <property type="project" value="UniProtKB-EC"/>
</dbReference>
<dbReference type="GO" id="GO:0009228">
    <property type="term" value="P:thiamine biosynthetic process"/>
    <property type="evidence" value="ECO:0007669"/>
    <property type="project" value="UniProtKB-KW"/>
</dbReference>
<dbReference type="GO" id="GO:0009229">
    <property type="term" value="P:thiamine diphosphate biosynthetic process"/>
    <property type="evidence" value="ECO:0007669"/>
    <property type="project" value="UniProtKB-UniRule"/>
</dbReference>
<dbReference type="GO" id="GO:0052837">
    <property type="term" value="P:thiazole biosynthetic process"/>
    <property type="evidence" value="ECO:0000318"/>
    <property type="project" value="GO_Central"/>
</dbReference>
<dbReference type="GO" id="GO:0002937">
    <property type="term" value="P:tRNA 4-thiouridine biosynthesis"/>
    <property type="evidence" value="ECO:0000318"/>
    <property type="project" value="GO_Central"/>
</dbReference>
<dbReference type="CDD" id="cd01712">
    <property type="entry name" value="PPase_ThiI"/>
    <property type="match status" value="1"/>
</dbReference>
<dbReference type="CDD" id="cd00158">
    <property type="entry name" value="RHOD"/>
    <property type="match status" value="1"/>
</dbReference>
<dbReference type="CDD" id="cd11716">
    <property type="entry name" value="THUMP_ThiI"/>
    <property type="match status" value="1"/>
</dbReference>
<dbReference type="FunFam" id="3.30.2130.30:FF:000002">
    <property type="entry name" value="tRNA sulfurtransferase"/>
    <property type="match status" value="1"/>
</dbReference>
<dbReference type="FunFam" id="3.40.250.10:FF:000003">
    <property type="entry name" value="tRNA sulfurtransferase"/>
    <property type="match status" value="1"/>
</dbReference>
<dbReference type="FunFam" id="3.40.50.620:FF:000029">
    <property type="entry name" value="tRNA sulfurtransferase"/>
    <property type="match status" value="1"/>
</dbReference>
<dbReference type="Gene3D" id="3.30.2130.30">
    <property type="match status" value="1"/>
</dbReference>
<dbReference type="Gene3D" id="3.40.50.620">
    <property type="entry name" value="HUPs"/>
    <property type="match status" value="1"/>
</dbReference>
<dbReference type="Gene3D" id="3.40.250.10">
    <property type="entry name" value="Rhodanese-like domain"/>
    <property type="match status" value="1"/>
</dbReference>
<dbReference type="HAMAP" id="MF_00021">
    <property type="entry name" value="ThiI"/>
    <property type="match status" value="1"/>
</dbReference>
<dbReference type="InterPro" id="IPR001763">
    <property type="entry name" value="Rhodanese-like_dom"/>
</dbReference>
<dbReference type="InterPro" id="IPR036873">
    <property type="entry name" value="Rhodanese-like_dom_sf"/>
</dbReference>
<dbReference type="InterPro" id="IPR014729">
    <property type="entry name" value="Rossmann-like_a/b/a_fold"/>
</dbReference>
<dbReference type="InterPro" id="IPR020536">
    <property type="entry name" value="ThiI_AANH"/>
</dbReference>
<dbReference type="InterPro" id="IPR054173">
    <property type="entry name" value="ThiI_fer"/>
</dbReference>
<dbReference type="InterPro" id="IPR049961">
    <property type="entry name" value="ThiI_N"/>
</dbReference>
<dbReference type="InterPro" id="IPR026340">
    <property type="entry name" value="THII_Thiazole_biosynth_dom"/>
</dbReference>
<dbReference type="InterPro" id="IPR004114">
    <property type="entry name" value="THUMP_dom"/>
</dbReference>
<dbReference type="InterPro" id="IPR049962">
    <property type="entry name" value="THUMP_ThiI"/>
</dbReference>
<dbReference type="InterPro" id="IPR003720">
    <property type="entry name" value="tRNA_STrfase"/>
</dbReference>
<dbReference type="InterPro" id="IPR050102">
    <property type="entry name" value="tRNA_sulfurtransferase_ThiI"/>
</dbReference>
<dbReference type="NCBIfam" id="TIGR04271">
    <property type="entry name" value="ThiI_C_thiazole"/>
    <property type="match status" value="1"/>
</dbReference>
<dbReference type="NCBIfam" id="TIGR00342">
    <property type="entry name" value="tRNA uracil 4-sulfurtransferase ThiI"/>
    <property type="match status" value="1"/>
</dbReference>
<dbReference type="PANTHER" id="PTHR43209">
    <property type="entry name" value="TRNA SULFURTRANSFERASE"/>
    <property type="match status" value="1"/>
</dbReference>
<dbReference type="PANTHER" id="PTHR43209:SF1">
    <property type="entry name" value="TRNA SULFURTRANSFERASE"/>
    <property type="match status" value="1"/>
</dbReference>
<dbReference type="Pfam" id="PF02568">
    <property type="entry name" value="ThiI"/>
    <property type="match status" value="1"/>
</dbReference>
<dbReference type="Pfam" id="PF22025">
    <property type="entry name" value="ThiI_fer"/>
    <property type="match status" value="1"/>
</dbReference>
<dbReference type="Pfam" id="PF02926">
    <property type="entry name" value="THUMP"/>
    <property type="match status" value="1"/>
</dbReference>
<dbReference type="SMART" id="SM00981">
    <property type="entry name" value="THUMP"/>
    <property type="match status" value="1"/>
</dbReference>
<dbReference type="SUPFAM" id="SSF52402">
    <property type="entry name" value="Adenine nucleotide alpha hydrolases-like"/>
    <property type="match status" value="1"/>
</dbReference>
<dbReference type="SUPFAM" id="SSF52821">
    <property type="entry name" value="Rhodanese/Cell cycle control phosphatase"/>
    <property type="match status" value="1"/>
</dbReference>
<dbReference type="SUPFAM" id="SSF143437">
    <property type="entry name" value="THUMP domain-like"/>
    <property type="match status" value="1"/>
</dbReference>
<dbReference type="PROSITE" id="PS50206">
    <property type="entry name" value="RHODANESE_3"/>
    <property type="match status" value="1"/>
</dbReference>
<dbReference type="PROSITE" id="PS51165">
    <property type="entry name" value="THUMP"/>
    <property type="match status" value="1"/>
</dbReference>
<name>THII_SALTY</name>
<proteinExistence type="inferred from homology"/>
<evidence type="ECO:0000255" key="1">
    <source>
        <dbReference type="HAMAP-Rule" id="MF_00021"/>
    </source>
</evidence>
<evidence type="ECO:0000305" key="2"/>
<keyword id="KW-0067">ATP-binding</keyword>
<keyword id="KW-0963">Cytoplasm</keyword>
<keyword id="KW-1015">Disulfide bond</keyword>
<keyword id="KW-0547">Nucleotide-binding</keyword>
<keyword id="KW-0676">Redox-active center</keyword>
<keyword id="KW-1185">Reference proteome</keyword>
<keyword id="KW-0694">RNA-binding</keyword>
<keyword id="KW-0784">Thiamine biosynthesis</keyword>
<keyword id="KW-0808">Transferase</keyword>
<keyword id="KW-0820">tRNA-binding</keyword>
<organism>
    <name type="scientific">Salmonella typhimurium (strain LT2 / SGSC1412 / ATCC 700720)</name>
    <dbReference type="NCBI Taxonomy" id="99287"/>
    <lineage>
        <taxon>Bacteria</taxon>
        <taxon>Pseudomonadati</taxon>
        <taxon>Pseudomonadota</taxon>
        <taxon>Gammaproteobacteria</taxon>
        <taxon>Enterobacterales</taxon>
        <taxon>Enterobacteriaceae</taxon>
        <taxon>Salmonella</taxon>
    </lineage>
</organism>
<accession>P55913</accession>
<accession>O06955</accession>
<protein>
    <recommendedName>
        <fullName evidence="1">tRNA sulfurtransferase</fullName>
        <ecNumber evidence="1">2.8.1.4</ecNumber>
    </recommendedName>
    <alternativeName>
        <fullName evidence="1">Sulfur carrier protein ThiS sulfurtransferase</fullName>
    </alternativeName>
    <alternativeName>
        <fullName evidence="1">Thiamine biosynthesis protein ThiI</fullName>
    </alternativeName>
    <alternativeName>
        <fullName evidence="1">tRNA 4-thiouridine synthase</fullName>
    </alternativeName>
</protein>